<name>CUTC_CHRVO</name>
<evidence type="ECO:0000255" key="1">
    <source>
        <dbReference type="HAMAP-Rule" id="MF_00795"/>
    </source>
</evidence>
<protein>
    <recommendedName>
        <fullName evidence="1">PF03932 family protein CutC</fullName>
    </recommendedName>
</protein>
<sequence>MDKILEICAGSLASCIAAQEGGAQRVELCDNLGEGGTTPSYGALAMARGRLNIALHAIIRPRGGDFLYSALEFDAMAHDVEVCRSLGLDGVVLGLLTADGDVDVARTRQLAALAGPMAVTFHRAFDLAREPEQALEDVIAAGCSRLLSSGQAASAPEGAALLARLREQAGGRLTVMPGAGVRPGNIAGLAAASGCIEFHASARGQVASAMRYRRGGVGMGASGVDEYARQETSASQVRALREALDKA</sequence>
<organism>
    <name type="scientific">Chromobacterium violaceum (strain ATCC 12472 / DSM 30191 / JCM 1249 / CCUG 213 / NBRC 12614 / NCIMB 9131 / NCTC 9757 / MK)</name>
    <dbReference type="NCBI Taxonomy" id="243365"/>
    <lineage>
        <taxon>Bacteria</taxon>
        <taxon>Pseudomonadati</taxon>
        <taxon>Pseudomonadota</taxon>
        <taxon>Betaproteobacteria</taxon>
        <taxon>Neisseriales</taxon>
        <taxon>Chromobacteriaceae</taxon>
        <taxon>Chromobacterium</taxon>
    </lineage>
</organism>
<accession>Q7NY61</accession>
<feature type="chain" id="PRO_0000215063" description="PF03932 family protein CutC">
    <location>
        <begin position="1"/>
        <end position="247"/>
    </location>
</feature>
<dbReference type="EMBL" id="AE016825">
    <property type="protein sequence ID" value="AAQ59089.1"/>
    <property type="molecule type" value="Genomic_DNA"/>
</dbReference>
<dbReference type="RefSeq" id="WP_011134966.1">
    <property type="nucleotide sequence ID" value="NC_005085.1"/>
</dbReference>
<dbReference type="SMR" id="Q7NY61"/>
<dbReference type="STRING" id="243365.CV_1414"/>
<dbReference type="KEGG" id="cvi:CV_1414"/>
<dbReference type="eggNOG" id="COG3142">
    <property type="taxonomic scope" value="Bacteria"/>
</dbReference>
<dbReference type="HOGENOM" id="CLU_050555_3_1_4"/>
<dbReference type="OrthoDB" id="9815677at2"/>
<dbReference type="Proteomes" id="UP000001424">
    <property type="component" value="Chromosome"/>
</dbReference>
<dbReference type="GO" id="GO:0005737">
    <property type="term" value="C:cytoplasm"/>
    <property type="evidence" value="ECO:0007669"/>
    <property type="project" value="UniProtKB-SubCell"/>
</dbReference>
<dbReference type="GO" id="GO:0005507">
    <property type="term" value="F:copper ion binding"/>
    <property type="evidence" value="ECO:0007669"/>
    <property type="project" value="TreeGrafter"/>
</dbReference>
<dbReference type="FunFam" id="3.20.20.380:FF:000001">
    <property type="entry name" value="Copper homeostasis protein CutC"/>
    <property type="match status" value="1"/>
</dbReference>
<dbReference type="Gene3D" id="3.20.20.380">
    <property type="entry name" value="Copper homeostasis (CutC) domain"/>
    <property type="match status" value="1"/>
</dbReference>
<dbReference type="HAMAP" id="MF_00795">
    <property type="entry name" value="CutC"/>
    <property type="match status" value="1"/>
</dbReference>
<dbReference type="InterPro" id="IPR005627">
    <property type="entry name" value="CutC-like"/>
</dbReference>
<dbReference type="InterPro" id="IPR036822">
    <property type="entry name" value="CutC-like_dom_sf"/>
</dbReference>
<dbReference type="PANTHER" id="PTHR12598">
    <property type="entry name" value="COPPER HOMEOSTASIS PROTEIN CUTC"/>
    <property type="match status" value="1"/>
</dbReference>
<dbReference type="PANTHER" id="PTHR12598:SF0">
    <property type="entry name" value="COPPER HOMEOSTASIS PROTEIN CUTC HOMOLOG"/>
    <property type="match status" value="1"/>
</dbReference>
<dbReference type="Pfam" id="PF03932">
    <property type="entry name" value="CutC"/>
    <property type="match status" value="1"/>
</dbReference>
<dbReference type="SUPFAM" id="SSF110395">
    <property type="entry name" value="CutC-like"/>
    <property type="match status" value="1"/>
</dbReference>
<gene>
    <name evidence="1" type="primary">cutC</name>
    <name type="ordered locus">CV_1414</name>
</gene>
<proteinExistence type="inferred from homology"/>
<comment type="subcellular location">
    <subcellularLocation>
        <location evidence="1">Cytoplasm</location>
    </subcellularLocation>
</comment>
<comment type="similarity">
    <text evidence="1">Belongs to the CutC family.</text>
</comment>
<comment type="caution">
    <text evidence="1">Once thought to be involved in copper homeostasis, experiments in E.coli have shown this is not the case.</text>
</comment>
<reference key="1">
    <citation type="journal article" date="2003" name="Proc. Natl. Acad. Sci. U.S.A.">
        <title>The complete genome sequence of Chromobacterium violaceum reveals remarkable and exploitable bacterial adaptability.</title>
        <authorList>
            <person name="Vasconcelos A.T.R."/>
            <person name="de Almeida D.F."/>
            <person name="Hungria M."/>
            <person name="Guimaraes C.T."/>
            <person name="Antonio R.V."/>
            <person name="Almeida F.C."/>
            <person name="de Almeida L.G.P."/>
            <person name="de Almeida R."/>
            <person name="Alves-Gomes J.A."/>
            <person name="Andrade E.M."/>
            <person name="Araripe J."/>
            <person name="de Araujo M.F.F."/>
            <person name="Astolfi-Filho S."/>
            <person name="Azevedo V."/>
            <person name="Baptista A.J."/>
            <person name="Bataus L.A.M."/>
            <person name="Batista J.S."/>
            <person name="Belo A."/>
            <person name="van den Berg C."/>
            <person name="Bogo M."/>
            <person name="Bonatto S."/>
            <person name="Bordignon J."/>
            <person name="Brigido M.M."/>
            <person name="Brito C.A."/>
            <person name="Brocchi M."/>
            <person name="Burity H.A."/>
            <person name="Camargo A.A."/>
            <person name="Cardoso D.D.P."/>
            <person name="Carneiro N.P."/>
            <person name="Carraro D.M."/>
            <person name="Carvalho C.M.B."/>
            <person name="Cascardo J.C.M."/>
            <person name="Cavada B.S."/>
            <person name="Chueire L.M.O."/>
            <person name="Creczynski-Pasa T.B."/>
            <person name="Cunha-Junior N.C."/>
            <person name="Fagundes N."/>
            <person name="Falcao C.L."/>
            <person name="Fantinatti F."/>
            <person name="Farias I.P."/>
            <person name="Felipe M.S.S."/>
            <person name="Ferrari L.P."/>
            <person name="Ferro J.A."/>
            <person name="Ferro M.I.T."/>
            <person name="Franco G.R."/>
            <person name="Freitas N.S.A."/>
            <person name="Furlan L.R."/>
            <person name="Gazzinelli R.T."/>
            <person name="Gomes E.A."/>
            <person name="Goncalves P.R."/>
            <person name="Grangeiro T.B."/>
            <person name="Grattapaglia D."/>
            <person name="Grisard E.C."/>
            <person name="Hanna E.S."/>
            <person name="Jardim S.N."/>
            <person name="Laurino J."/>
            <person name="Leoi L.C.T."/>
            <person name="Lima L.F.A."/>
            <person name="Loureiro M.F."/>
            <person name="Lyra M.C.C.P."/>
            <person name="Madeira H.M.F."/>
            <person name="Manfio G.P."/>
            <person name="Maranhao A.Q."/>
            <person name="Martins W.S."/>
            <person name="di Mauro S.M.Z."/>
            <person name="de Medeiros S.R.B."/>
            <person name="Meissner R.V."/>
            <person name="Moreira M.A.M."/>
            <person name="Nascimento F.F."/>
            <person name="Nicolas M.F."/>
            <person name="Oliveira J.G."/>
            <person name="Oliveira S.C."/>
            <person name="Paixao R.F.C."/>
            <person name="Parente J.A."/>
            <person name="Pedrosa F.O."/>
            <person name="Pena S.D.J."/>
            <person name="Pereira J.O."/>
            <person name="Pereira M."/>
            <person name="Pinto L.S.R.C."/>
            <person name="Pinto L.S."/>
            <person name="Porto J.I.R."/>
            <person name="Potrich D.P."/>
            <person name="Ramalho-Neto C.E."/>
            <person name="Reis A.M.M."/>
            <person name="Rigo L.U."/>
            <person name="Rondinelli E."/>
            <person name="Santos E.B.P."/>
            <person name="Santos F.R."/>
            <person name="Schneider M.P.C."/>
            <person name="Seuanez H.N."/>
            <person name="Silva A.M.R."/>
            <person name="da Silva A.L.C."/>
            <person name="Silva D.W."/>
            <person name="Silva R."/>
            <person name="Simoes I.C."/>
            <person name="Simon D."/>
            <person name="Soares C.M.A."/>
            <person name="Soares R.B.A."/>
            <person name="Souza E.M."/>
            <person name="Souza K.R.L."/>
            <person name="Souza R.C."/>
            <person name="Steffens M.B.R."/>
            <person name="Steindel M."/>
            <person name="Teixeira S.R."/>
            <person name="Urmenyi T."/>
            <person name="Vettore A."/>
            <person name="Wassem R."/>
            <person name="Zaha A."/>
            <person name="Simpson A.J.G."/>
        </authorList>
    </citation>
    <scope>NUCLEOTIDE SEQUENCE [LARGE SCALE GENOMIC DNA]</scope>
    <source>
        <strain>ATCC 12472 / DSM 30191 / JCM 1249 / CCUG 213 / NBRC 12614 / NCIMB 9131 / NCTC 9757 / MK</strain>
    </source>
</reference>
<keyword id="KW-0963">Cytoplasm</keyword>
<keyword id="KW-1185">Reference proteome</keyword>